<sequence>MQTPKRRRGAQGCPRSSPSPPLLLLVGAVWFCAALSVAAGSFELTILHTNDVHARVEQTSRDSGKCTGQDCYGGVARRATKIRELRANHSHVLLLDAGDQYQGTIWFSFFKGREVVKFMNSLGYDAMALGNHEFDNGLAGLLDPLLKHANFPILSANIRPKGSIASNISGYILPYKIINVGSEKVGIIGYTTKETPVLSNPGPYLEFRDEVEELQKHANKLTTLGVNKIIALGHSGFFEDQRIARKVKGVDVVVGGHTNTFLYTGSPPSTEVAAGNYPFMVKSDDGRQVPVVQAYAFGKYLGYLNVIFDDKGNVIKSSGNPILLNKNISEDQDVKAEVNKMKIQLHNYSSQEIGKTIVYLNGTTQACRFHECNLGNLICDAVIYNNVRHPDYNEWNHVSMCIVNGGGIRSPIDERANNGTITLEELTAVLPFGGTFDLLQIKGCALKQAFEHSVHRHGQGMGELLQVSGIKVVYDLSRKPGSRVVSLNVLCTECRVPTYVPLEKEKTYKLLLPSFLAGGGDGYHMLKGDSSNHSSGNLDISIVGDYIKRMGKVFPAVEGRVIFSAGTLFQAQLFLTWGLCISLLYFIL</sequence>
<comment type="function">
    <text evidence="3 8">Hydrolyzes nucleotides into nucleosides (By similarity). Snake venom 5'-nucleotidases are widely distributed among venomous snake taxa, but there is a lack of information about their biological activities. They have been shown to inhibit platelet aggregation. This effect may be due to the liberation of inhibitory AMP or adenosine by its action on ADP released upon initiation of aggregation. Venom 5'-nucleotidases are also known to synergistically act in vivo with other toxins like ADPases, phospholipases, and disintegrins to exert a more pronounced anti-coagulant effect.</text>
</comment>
<comment type="catalytic activity">
    <reaction evidence="3">
        <text>a ribonucleoside 5'-phosphate + H2O = a ribonucleoside + phosphate</text>
        <dbReference type="Rhea" id="RHEA:12484"/>
        <dbReference type="ChEBI" id="CHEBI:15377"/>
        <dbReference type="ChEBI" id="CHEBI:18254"/>
        <dbReference type="ChEBI" id="CHEBI:43474"/>
        <dbReference type="ChEBI" id="CHEBI:58043"/>
        <dbReference type="EC" id="3.1.3.5"/>
    </reaction>
</comment>
<comment type="cofactor">
    <cofactor evidence="4">
        <name>Zn(2+)</name>
        <dbReference type="ChEBI" id="CHEBI:29105"/>
    </cofactor>
</comment>
<comment type="subcellular location">
    <subcellularLocation>
        <location evidence="3">Membrane</location>
        <topology evidence="4">Lipid-anchor</topology>
        <topology evidence="4">GPI-anchor</topology>
    </subcellularLocation>
</comment>
<comment type="tissue specificity">
    <text>Expressed by the venom gland.</text>
</comment>
<comment type="PTM">
    <text>Venom 5'-nucleotidases (or a part thereof) may be released into the venom via exosome-like vesicles. They may be attached via a GPI anchor to the membrane of these vesicles. Soluble forms of 5'-nucleotidase might be released by cleavage of the ectodomain in the exosome-like vesicles or venom gland cells.</text>
</comment>
<comment type="similarity">
    <text evidence="7">Belongs to the 5'-nucleotidase family.</text>
</comment>
<name>V5NTD_GLOBR</name>
<accession>B6EWW8</accession>
<accession>B6EWW7</accession>
<keyword id="KW-1015">Disulfide bond</keyword>
<keyword id="KW-0325">Glycoprotein</keyword>
<keyword id="KW-0336">GPI-anchor</keyword>
<keyword id="KW-0378">Hydrolase</keyword>
<keyword id="KW-0449">Lipoprotein</keyword>
<keyword id="KW-0472">Membrane</keyword>
<keyword id="KW-0479">Metal-binding</keyword>
<keyword id="KW-0547">Nucleotide-binding</keyword>
<keyword id="KW-0732">Signal</keyword>
<keyword id="KW-0862">Zinc</keyword>
<proteinExistence type="evidence at transcript level"/>
<evidence type="ECO:0000250" key="1"/>
<evidence type="ECO:0000250" key="2">
    <source>
        <dbReference type="UniProtKB" id="A0A2I4HXH5"/>
    </source>
</evidence>
<evidence type="ECO:0000250" key="3">
    <source>
        <dbReference type="UniProtKB" id="P0DJJ5"/>
    </source>
</evidence>
<evidence type="ECO:0000250" key="4">
    <source>
        <dbReference type="UniProtKB" id="P21589"/>
    </source>
</evidence>
<evidence type="ECO:0000250" key="5">
    <source>
        <dbReference type="UniProtKB" id="W8EFS0"/>
    </source>
</evidence>
<evidence type="ECO:0000255" key="6"/>
<evidence type="ECO:0000305" key="7"/>
<evidence type="ECO:0000305" key="8">
    <source>
    </source>
</evidence>
<feature type="signal peptide" evidence="1">
    <location>
        <begin position="1"/>
        <end position="40"/>
    </location>
</feature>
<feature type="chain" id="PRO_0000418205" description="Snake venom 5'-nucleotidase">
    <location>
        <begin position="41"/>
        <end position="564"/>
    </location>
</feature>
<feature type="propeptide" id="PRO_0000418206" description="Removed in mature form" evidence="4">
    <location>
        <begin position="565"/>
        <end position="588"/>
    </location>
</feature>
<feature type="binding site" evidence="2">
    <location>
        <position position="51"/>
    </location>
    <ligand>
        <name>Zn(2+)</name>
        <dbReference type="ChEBI" id="CHEBI:29105"/>
        <label>1</label>
    </ligand>
</feature>
<feature type="binding site" evidence="4">
    <location>
        <position position="51"/>
    </location>
    <ligand>
        <name>Zn(2+)</name>
        <dbReference type="ChEBI" id="CHEBI:29105"/>
        <label>2</label>
    </ligand>
</feature>
<feature type="binding site" evidence="2">
    <location>
        <position position="53"/>
    </location>
    <ligand>
        <name>Zn(2+)</name>
        <dbReference type="ChEBI" id="CHEBI:29105"/>
        <label>1</label>
    </ligand>
</feature>
<feature type="binding site" evidence="2">
    <location>
        <position position="99"/>
    </location>
    <ligand>
        <name>Zn(2+)</name>
        <dbReference type="ChEBI" id="CHEBI:29105"/>
        <label>1</label>
    </ligand>
</feature>
<feature type="binding site" evidence="2">
    <location>
        <position position="99"/>
    </location>
    <ligand>
        <name>Zn(2+)</name>
        <dbReference type="ChEBI" id="CHEBI:29105"/>
        <label>2</label>
    </ligand>
</feature>
<feature type="binding site" evidence="2">
    <location>
        <position position="131"/>
    </location>
    <ligand>
        <name>Zn(2+)</name>
        <dbReference type="ChEBI" id="CHEBI:29105"/>
        <label>2</label>
    </ligand>
</feature>
<feature type="binding site" evidence="2">
    <location>
        <position position="234"/>
    </location>
    <ligand>
        <name>Zn(2+)</name>
        <dbReference type="ChEBI" id="CHEBI:29105"/>
        <label>2</label>
    </ligand>
</feature>
<feature type="binding site" evidence="2">
    <location>
        <position position="257"/>
    </location>
    <ligand>
        <name>Zn(2+)</name>
        <dbReference type="ChEBI" id="CHEBI:29105"/>
        <label>2</label>
    </ligand>
</feature>
<feature type="binding site" evidence="4">
    <location>
        <position position="368"/>
    </location>
    <ligand>
        <name>AMP</name>
        <dbReference type="ChEBI" id="CHEBI:456215"/>
    </ligand>
</feature>
<feature type="binding site" evidence="4">
    <location>
        <position position="404"/>
    </location>
    <ligand>
        <name>AMP</name>
        <dbReference type="ChEBI" id="CHEBI:456215"/>
    </ligand>
</feature>
<feature type="binding site" evidence="4">
    <location>
        <position position="409"/>
    </location>
    <ligand>
        <name>AMP</name>
        <dbReference type="ChEBI" id="CHEBI:456215"/>
    </ligand>
</feature>
<feature type="binding site" evidence="4">
    <location>
        <position position="432"/>
    </location>
    <ligand>
        <name>AMP</name>
        <dbReference type="ChEBI" id="CHEBI:456215"/>
    </ligand>
</feature>
<feature type="binding site" evidence="4">
    <location>
        <position position="515"/>
    </location>
    <ligand>
        <name>AMP</name>
        <dbReference type="ChEBI" id="CHEBI:456215"/>
    </ligand>
</feature>
<feature type="binding site" evidence="4">
    <location>
        <position position="521"/>
    </location>
    <ligand>
        <name>AMP</name>
        <dbReference type="ChEBI" id="CHEBI:456215"/>
    </ligand>
</feature>
<feature type="site" description="Transition state stabilizer" evidence="4">
    <location>
        <position position="132"/>
    </location>
</feature>
<feature type="site" description="Transition state stabilizer" evidence="4">
    <location>
        <position position="135"/>
    </location>
</feature>
<feature type="lipid moiety-binding region" description="GPI-anchor amidated serine" evidence="4">
    <location>
        <position position="564"/>
    </location>
</feature>
<feature type="glycosylation site" description="N-linked (GlcNAc...) asparagine" evidence="6">
    <location>
        <position position="88"/>
    </location>
</feature>
<feature type="glycosylation site" description="N-linked (GlcNAc...) asparagine" evidence="6">
    <location>
        <position position="167"/>
    </location>
</feature>
<feature type="glycosylation site" description="N-linked (GlcNAc...) asparagine" evidence="6">
    <location>
        <position position="327"/>
    </location>
</feature>
<feature type="glycosylation site" description="N-linked (GlcNAc...) asparagine" evidence="6">
    <location>
        <position position="347"/>
    </location>
</feature>
<feature type="glycosylation site" description="N-linked (GlcNAc...) asparagine" evidence="6">
    <location>
        <position position="361"/>
    </location>
</feature>
<feature type="glycosylation site" description="N-linked (GlcNAc...) asparagine" evidence="6">
    <location>
        <position position="418"/>
    </location>
</feature>
<feature type="glycosylation site" description="N-linked (GlcNAc...) asparagine" evidence="6">
    <location>
        <position position="532"/>
    </location>
</feature>
<feature type="disulfide bond" evidence="2">
    <location>
        <begin position="66"/>
        <end position="71"/>
    </location>
</feature>
<feature type="disulfide bond" evidence="2">
    <location>
        <begin position="367"/>
        <end position="372"/>
    </location>
</feature>
<feature type="disulfide bond" evidence="2">
    <location>
        <begin position="379"/>
        <end position="401"/>
    </location>
</feature>
<feature type="disulfide bond" evidence="2">
    <location>
        <begin position="491"/>
        <end position="494"/>
    </location>
</feature>
<feature type="sequence conflict" description="In Ref. 1; BAG82601." evidence="7" ref="1">
    <original>V</original>
    <variation>F</variation>
    <location>
        <position position="197"/>
    </location>
</feature>
<dbReference type="EC" id="3.1.3.5" evidence="3"/>
<dbReference type="EMBL" id="AB332405">
    <property type="protein sequence ID" value="BAG82602.1"/>
    <property type="molecule type" value="mRNA"/>
</dbReference>
<dbReference type="EMBL" id="AB332404">
    <property type="protein sequence ID" value="BAG82601.1"/>
    <property type="molecule type" value="mRNA"/>
</dbReference>
<dbReference type="SMR" id="B6EWW8"/>
<dbReference type="BRENDA" id="3.1.3.5">
    <property type="organism ID" value="8410"/>
</dbReference>
<dbReference type="GO" id="GO:0005886">
    <property type="term" value="C:plasma membrane"/>
    <property type="evidence" value="ECO:0007669"/>
    <property type="project" value="TreeGrafter"/>
</dbReference>
<dbReference type="GO" id="GO:0098552">
    <property type="term" value="C:side of membrane"/>
    <property type="evidence" value="ECO:0007669"/>
    <property type="project" value="UniProtKB-KW"/>
</dbReference>
<dbReference type="GO" id="GO:0008253">
    <property type="term" value="F:5'-nucleotidase activity"/>
    <property type="evidence" value="ECO:0007669"/>
    <property type="project" value="UniProtKB-EC"/>
</dbReference>
<dbReference type="GO" id="GO:0046872">
    <property type="term" value="F:metal ion binding"/>
    <property type="evidence" value="ECO:0007669"/>
    <property type="project" value="UniProtKB-KW"/>
</dbReference>
<dbReference type="GO" id="GO:0000166">
    <property type="term" value="F:nucleotide binding"/>
    <property type="evidence" value="ECO:0007669"/>
    <property type="project" value="UniProtKB-KW"/>
</dbReference>
<dbReference type="GO" id="GO:0006196">
    <property type="term" value="P:AMP catabolic process"/>
    <property type="evidence" value="ECO:0007669"/>
    <property type="project" value="TreeGrafter"/>
</dbReference>
<dbReference type="CDD" id="cd07409">
    <property type="entry name" value="MPP_CD73_N"/>
    <property type="match status" value="1"/>
</dbReference>
<dbReference type="FunFam" id="3.90.780.10:FF:000001">
    <property type="entry name" value="NT5E isoform 3"/>
    <property type="match status" value="1"/>
</dbReference>
<dbReference type="FunFam" id="3.60.21.10:FF:000020">
    <property type="entry name" value="NT5E isoform 4"/>
    <property type="match status" value="1"/>
</dbReference>
<dbReference type="Gene3D" id="3.60.21.10">
    <property type="match status" value="1"/>
</dbReference>
<dbReference type="Gene3D" id="3.90.780.10">
    <property type="entry name" value="5'-Nucleotidase, C-terminal domain"/>
    <property type="match status" value="1"/>
</dbReference>
<dbReference type="InterPro" id="IPR008334">
    <property type="entry name" value="5'-Nucleotdase_C"/>
</dbReference>
<dbReference type="InterPro" id="IPR036907">
    <property type="entry name" value="5'-Nucleotdase_C_sf"/>
</dbReference>
<dbReference type="InterPro" id="IPR006146">
    <property type="entry name" value="5'-Nucleotdase_CS"/>
</dbReference>
<dbReference type="InterPro" id="IPR006179">
    <property type="entry name" value="5_nucleotidase/apyrase"/>
</dbReference>
<dbReference type="InterPro" id="IPR004843">
    <property type="entry name" value="Calcineurin-like_PHP_ApaH"/>
</dbReference>
<dbReference type="InterPro" id="IPR029052">
    <property type="entry name" value="Metallo-depent_PP-like"/>
</dbReference>
<dbReference type="PANTHER" id="PTHR11575:SF24">
    <property type="entry name" value="5'-NUCLEOTIDASE"/>
    <property type="match status" value="1"/>
</dbReference>
<dbReference type="PANTHER" id="PTHR11575">
    <property type="entry name" value="5'-NUCLEOTIDASE-RELATED"/>
    <property type="match status" value="1"/>
</dbReference>
<dbReference type="Pfam" id="PF02872">
    <property type="entry name" value="5_nucleotid_C"/>
    <property type="match status" value="1"/>
</dbReference>
<dbReference type="Pfam" id="PF00149">
    <property type="entry name" value="Metallophos"/>
    <property type="match status" value="1"/>
</dbReference>
<dbReference type="PRINTS" id="PR01607">
    <property type="entry name" value="APYRASEFAMLY"/>
</dbReference>
<dbReference type="SUPFAM" id="SSF55816">
    <property type="entry name" value="5'-nucleotidase (syn. UDP-sugar hydrolase), C-terminal domain"/>
    <property type="match status" value="1"/>
</dbReference>
<dbReference type="SUPFAM" id="SSF56300">
    <property type="entry name" value="Metallo-dependent phosphatases"/>
    <property type="match status" value="1"/>
</dbReference>
<dbReference type="PROSITE" id="PS00785">
    <property type="entry name" value="5_NUCLEOTIDASE_1"/>
    <property type="match status" value="1"/>
</dbReference>
<dbReference type="PROSITE" id="PS00786">
    <property type="entry name" value="5_NUCLEOTIDASE_2"/>
    <property type="match status" value="1"/>
</dbReference>
<reference key="1">
    <citation type="journal article" date="2009" name="Toxicon">
        <title>Molecular cloning and characterization of ecto-5'-nucleotidase from the venoms of Gloydius blomhoffi.</title>
        <authorList>
            <person name="Ogawa Y."/>
            <person name="Murayama N."/>
            <person name="Yanoshita R."/>
        </authorList>
    </citation>
    <scope>NUCLEOTIDE SEQUENCE [MRNA]</scope>
    <source>
        <tissue>Venom gland</tissue>
    </source>
</reference>
<reference key="2">
    <citation type="journal article" date="2010" name="Cell Biochem. Funct.">
        <title>The pharmacological role of nucleotidases in snake venoms.</title>
        <authorList>
            <person name="Dhananjaya B.L."/>
            <person name="D'Souza C.J."/>
        </authorList>
    </citation>
    <scope>REVIEW</scope>
    <scope>FUNCTION</scope>
</reference>
<organism>
    <name type="scientific">Gloydius brevicauda</name>
    <name type="common">Korean slamosa snake</name>
    <name type="synonym">Agkistrodon halys brevicaudus</name>
    <dbReference type="NCBI Taxonomy" id="3148161"/>
    <lineage>
        <taxon>Eukaryota</taxon>
        <taxon>Metazoa</taxon>
        <taxon>Chordata</taxon>
        <taxon>Craniata</taxon>
        <taxon>Vertebrata</taxon>
        <taxon>Euteleostomi</taxon>
        <taxon>Lepidosauria</taxon>
        <taxon>Squamata</taxon>
        <taxon>Bifurcata</taxon>
        <taxon>Unidentata</taxon>
        <taxon>Episquamata</taxon>
        <taxon>Toxicofera</taxon>
        <taxon>Serpentes</taxon>
        <taxon>Colubroidea</taxon>
        <taxon>Viperidae</taxon>
        <taxon>Crotalinae</taxon>
        <taxon>Gloydius</taxon>
    </lineage>
</organism>
<protein>
    <recommendedName>
        <fullName evidence="5">Snake venom 5'-nucleotidase</fullName>
        <shortName evidence="5">5'-NT</shortName>
        <ecNumber evidence="3">3.1.3.5</ecNumber>
    </recommendedName>
    <alternativeName>
        <fullName evidence="3">Ecto-5'-nucleotidase</fullName>
    </alternativeName>
</protein>